<comment type="function">
    <text evidence="1">NDH-1 shuttles electrons from NADH, via FMN and iron-sulfur (Fe-S) centers, to quinones in the respiratory chain. The immediate electron acceptor for the enzyme in this species is believed to be a menaquinone. Couples the redox reaction to proton translocation (for every two electrons transferred, four hydrogen ions are translocated across the cytoplasmic membrane), and thus conserves the redox energy in a proton gradient.</text>
</comment>
<comment type="catalytic activity">
    <reaction evidence="1">
        <text>a quinone + NADH + 5 H(+)(in) = a quinol + NAD(+) + 4 H(+)(out)</text>
        <dbReference type="Rhea" id="RHEA:57888"/>
        <dbReference type="ChEBI" id="CHEBI:15378"/>
        <dbReference type="ChEBI" id="CHEBI:24646"/>
        <dbReference type="ChEBI" id="CHEBI:57540"/>
        <dbReference type="ChEBI" id="CHEBI:57945"/>
        <dbReference type="ChEBI" id="CHEBI:132124"/>
    </reaction>
</comment>
<comment type="subunit">
    <text evidence="1">NDH-1 is composed of 14 different subunits. Subunits NuoA, H, J, K, L, M, N constitute the membrane sector of the complex.</text>
</comment>
<comment type="subcellular location">
    <subcellularLocation>
        <location evidence="1">Cell inner membrane</location>
        <topology evidence="1">Multi-pass membrane protein</topology>
    </subcellularLocation>
</comment>
<comment type="similarity">
    <text evidence="1">Belongs to the complex I subunit 3 family.</text>
</comment>
<gene>
    <name evidence="1" type="primary">nuoA</name>
    <name type="ordered locus">FP2232</name>
</gene>
<accession>A6H1R4</accession>
<evidence type="ECO:0000255" key="1">
    <source>
        <dbReference type="HAMAP-Rule" id="MF_01394"/>
    </source>
</evidence>
<keyword id="KW-0997">Cell inner membrane</keyword>
<keyword id="KW-1003">Cell membrane</keyword>
<keyword id="KW-0472">Membrane</keyword>
<keyword id="KW-0520">NAD</keyword>
<keyword id="KW-0874">Quinone</keyword>
<keyword id="KW-1185">Reference proteome</keyword>
<keyword id="KW-1278">Translocase</keyword>
<keyword id="KW-0812">Transmembrane</keyword>
<keyword id="KW-1133">Transmembrane helix</keyword>
<keyword id="KW-0813">Transport</keyword>
<protein>
    <recommendedName>
        <fullName evidence="1">NADH-quinone oxidoreductase subunit A</fullName>
        <ecNumber evidence="1">7.1.1.-</ecNumber>
    </recommendedName>
    <alternativeName>
        <fullName evidence="1">NADH dehydrogenase I subunit A</fullName>
    </alternativeName>
    <alternativeName>
        <fullName evidence="1">NDH-1 subunit A</fullName>
    </alternativeName>
    <alternativeName>
        <fullName evidence="1">NUO1</fullName>
    </alternativeName>
</protein>
<reference key="1">
    <citation type="journal article" date="2007" name="Nat. Biotechnol.">
        <title>Complete genome sequence of the fish pathogen Flavobacterium psychrophilum.</title>
        <authorList>
            <person name="Duchaud E."/>
            <person name="Boussaha M."/>
            <person name="Loux V."/>
            <person name="Bernardet J.-F."/>
            <person name="Michel C."/>
            <person name="Kerouault B."/>
            <person name="Mondot S."/>
            <person name="Nicolas P."/>
            <person name="Bossy R."/>
            <person name="Caron C."/>
            <person name="Bessieres P."/>
            <person name="Gibrat J.-F."/>
            <person name="Claverol S."/>
            <person name="Dumetz F."/>
            <person name="Le Henaff M."/>
            <person name="Benmansour A."/>
        </authorList>
    </citation>
    <scope>NUCLEOTIDE SEQUENCE [LARGE SCALE GENOMIC DNA]</scope>
    <source>
        <strain>ATCC 49511 / DSM 21280 / CIP 103535 / JIP02/86</strain>
    </source>
</reference>
<feature type="chain" id="PRO_0000362686" description="NADH-quinone oxidoreductase subunit A">
    <location>
        <begin position="1"/>
        <end position="121"/>
    </location>
</feature>
<feature type="transmembrane region" description="Helical" evidence="1">
    <location>
        <begin position="8"/>
        <end position="28"/>
    </location>
</feature>
<feature type="transmembrane region" description="Helical" evidence="1">
    <location>
        <begin position="65"/>
        <end position="85"/>
    </location>
</feature>
<feature type="transmembrane region" description="Helical" evidence="1">
    <location>
        <begin position="93"/>
        <end position="113"/>
    </location>
</feature>
<name>NUOA_FLAPJ</name>
<organism>
    <name type="scientific">Flavobacterium psychrophilum (strain ATCC 49511 / DSM 21280 / CIP 103535 / JIP02/86)</name>
    <dbReference type="NCBI Taxonomy" id="402612"/>
    <lineage>
        <taxon>Bacteria</taxon>
        <taxon>Pseudomonadati</taxon>
        <taxon>Bacteroidota</taxon>
        <taxon>Flavobacteriia</taxon>
        <taxon>Flavobacteriales</taxon>
        <taxon>Flavobacteriaceae</taxon>
        <taxon>Flavobacterium</taxon>
    </lineage>
</organism>
<sequence length="121" mass="13804">MQSNQLDYLPIFMQMGLAVGFVVLTIIGSSFLGPKRSSVNKDKNFESGIESIGNARVPFSVKYFLVAILFVLFDVEVIFLYPWAINFQELGMQGMIKMVIFMSLLLVGFFYIIKKKALEWD</sequence>
<proteinExistence type="inferred from homology"/>
<dbReference type="EC" id="7.1.1.-" evidence="1"/>
<dbReference type="EMBL" id="AM398681">
    <property type="protein sequence ID" value="CAL44288.1"/>
    <property type="molecule type" value="Genomic_DNA"/>
</dbReference>
<dbReference type="RefSeq" id="WP_011964322.1">
    <property type="nucleotide sequence ID" value="NC_009613.3"/>
</dbReference>
<dbReference type="RefSeq" id="YP_001297089.1">
    <property type="nucleotide sequence ID" value="NC_009613.3"/>
</dbReference>
<dbReference type="SMR" id="A6H1R4"/>
<dbReference type="STRING" id="402612.FP2232"/>
<dbReference type="EnsemblBacteria" id="CAL44288">
    <property type="protein sequence ID" value="CAL44288"/>
    <property type="gene ID" value="FP2232"/>
</dbReference>
<dbReference type="KEGG" id="fps:FP2232"/>
<dbReference type="PATRIC" id="fig|402612.5.peg.2282"/>
<dbReference type="eggNOG" id="COG0838">
    <property type="taxonomic scope" value="Bacteria"/>
</dbReference>
<dbReference type="HOGENOM" id="CLU_119549_0_2_10"/>
<dbReference type="OrthoDB" id="9791970at2"/>
<dbReference type="Proteomes" id="UP000006394">
    <property type="component" value="Chromosome"/>
</dbReference>
<dbReference type="GO" id="GO:0030964">
    <property type="term" value="C:NADH dehydrogenase complex"/>
    <property type="evidence" value="ECO:0007669"/>
    <property type="project" value="TreeGrafter"/>
</dbReference>
<dbReference type="GO" id="GO:0005886">
    <property type="term" value="C:plasma membrane"/>
    <property type="evidence" value="ECO:0007669"/>
    <property type="project" value="UniProtKB-SubCell"/>
</dbReference>
<dbReference type="GO" id="GO:0008137">
    <property type="term" value="F:NADH dehydrogenase (ubiquinone) activity"/>
    <property type="evidence" value="ECO:0007669"/>
    <property type="project" value="InterPro"/>
</dbReference>
<dbReference type="GO" id="GO:0050136">
    <property type="term" value="F:NADH:ubiquinone reductase (non-electrogenic) activity"/>
    <property type="evidence" value="ECO:0007669"/>
    <property type="project" value="UniProtKB-UniRule"/>
</dbReference>
<dbReference type="GO" id="GO:0048038">
    <property type="term" value="F:quinone binding"/>
    <property type="evidence" value="ECO:0007669"/>
    <property type="project" value="UniProtKB-KW"/>
</dbReference>
<dbReference type="Gene3D" id="1.20.58.1610">
    <property type="entry name" value="NADH:ubiquinone/plastoquinone oxidoreductase, chain 3"/>
    <property type="match status" value="1"/>
</dbReference>
<dbReference type="HAMAP" id="MF_01394">
    <property type="entry name" value="NDH1_NuoA"/>
    <property type="match status" value="1"/>
</dbReference>
<dbReference type="InterPro" id="IPR023043">
    <property type="entry name" value="NAD(P)H_OxRDtase_bac/plastid"/>
</dbReference>
<dbReference type="InterPro" id="IPR000440">
    <property type="entry name" value="NADH_UbQ/plastoQ_OxRdtase_su3"/>
</dbReference>
<dbReference type="InterPro" id="IPR038430">
    <property type="entry name" value="NDAH_ubi_oxred_su3_sf"/>
</dbReference>
<dbReference type="PANTHER" id="PTHR11058:SF22">
    <property type="entry name" value="NADH-QUINONE OXIDOREDUCTASE SUBUNIT A"/>
    <property type="match status" value="1"/>
</dbReference>
<dbReference type="PANTHER" id="PTHR11058">
    <property type="entry name" value="NADH-UBIQUINONE OXIDOREDUCTASE CHAIN 3"/>
    <property type="match status" value="1"/>
</dbReference>
<dbReference type="Pfam" id="PF00507">
    <property type="entry name" value="Oxidored_q4"/>
    <property type="match status" value="1"/>
</dbReference>